<name>SYL_CAUVC</name>
<evidence type="ECO:0000255" key="1">
    <source>
        <dbReference type="HAMAP-Rule" id="MF_00049"/>
    </source>
</evidence>
<gene>
    <name evidence="1" type="primary">leuS</name>
    <name type="ordered locus">CC_3749</name>
</gene>
<protein>
    <recommendedName>
        <fullName evidence="1">Leucine--tRNA ligase</fullName>
        <ecNumber evidence="1">6.1.1.4</ecNumber>
    </recommendedName>
    <alternativeName>
        <fullName evidence="1">Leucyl-tRNA synthetase</fullName>
        <shortName evidence="1">LeuRS</shortName>
    </alternativeName>
</protein>
<feature type="chain" id="PRO_0000151995" description="Leucine--tRNA ligase">
    <location>
        <begin position="1"/>
        <end position="861"/>
    </location>
</feature>
<feature type="short sequence motif" description="'HIGH' region">
    <location>
        <begin position="42"/>
        <end position="52"/>
    </location>
</feature>
<feature type="short sequence motif" description="'KMSKS' region">
    <location>
        <begin position="623"/>
        <end position="627"/>
    </location>
</feature>
<feature type="binding site" evidence="1">
    <location>
        <position position="626"/>
    </location>
    <ligand>
        <name>ATP</name>
        <dbReference type="ChEBI" id="CHEBI:30616"/>
    </ligand>
</feature>
<sequence length="861" mass="95536">MARYNPKDTEPKWREAWAKADVFKTGEINDGRPKYYVLEMFPYPSGRIHMGHVRNYAMGDVVARYKRAQGFNVLHPMGWDAFGMPAENAAMERGVHPKGWTYDNIAAMREQLKSLGISVDWSREFATCDPEYYGKQQAWFLRLLKRGLVYRKEASVNWDPVDMTVLANEQVIDGKGWRSGAVVEKRKLTQWFLRITDYADALIDGLKTLDRWPDKVRLMQENWIGRSKGLRFKFQFDGEAPDGMAEGLEVYTTRPDTLFGASFVGIAPEHPLAEQLAAANPQIQTFIADCRKGGTSEAEIESAEKLGYDTGLRVKHPLDPSITLPVWIANFILMDYGTGAIFACPAHDQRDLDFARKYDLPVLPVVLPNGEDPATFTVGKEAYVGPGKIFNSKFLDGLDVEAAKAEAIARIEAANQGQGATVYRLRDWGVSRQRYWGCPIPVIHCEACGVVPVPEDQLPVALPDDVTFDKPGNPLLRHPTWRHTTCPSCGGKAERETDTLDTFIDSSWYFARFADTQAAEPVGKDAADHWLPVDQYIGGVEHAILHLLYARFITRALKDEGLLSVEEPFAGLFTQGMVTHEAYKNEAGEWVEPSDVVITTEGSTRTAKHAKTGAPIIIGDIEKMSKSKKNVVAPEDIFEAYGVDSARLFVMSDSPPERDVQWTNSGVEGSWRFTHRLWNEFDSQPAGDFAHDDSDEAALALRKAAHKLIGFVTDSIEGFRFNSGVARLYEFLNALKAAPAEGASQAVLAARAEALNILARLVAPFTPHLAEEAWARMGGEGMVVDAPWPKADPALAADDERVLPIQINGKRRGEIKVKAGAPDDEVTKIALADPNVMAHLEGLTVRKVIVVKDRIVNIVAN</sequence>
<organism>
    <name type="scientific">Caulobacter vibrioides (strain ATCC 19089 / CIP 103742 / CB 15)</name>
    <name type="common">Caulobacter crescentus</name>
    <dbReference type="NCBI Taxonomy" id="190650"/>
    <lineage>
        <taxon>Bacteria</taxon>
        <taxon>Pseudomonadati</taxon>
        <taxon>Pseudomonadota</taxon>
        <taxon>Alphaproteobacteria</taxon>
        <taxon>Caulobacterales</taxon>
        <taxon>Caulobacteraceae</taxon>
        <taxon>Caulobacter</taxon>
    </lineage>
</organism>
<proteinExistence type="inferred from homology"/>
<accession>Q9A217</accession>
<reference key="1">
    <citation type="journal article" date="2001" name="Proc. Natl. Acad. Sci. U.S.A.">
        <title>Complete genome sequence of Caulobacter crescentus.</title>
        <authorList>
            <person name="Nierman W.C."/>
            <person name="Feldblyum T.V."/>
            <person name="Laub M.T."/>
            <person name="Paulsen I.T."/>
            <person name="Nelson K.E."/>
            <person name="Eisen J.A."/>
            <person name="Heidelberg J.F."/>
            <person name="Alley M.R.K."/>
            <person name="Ohta N."/>
            <person name="Maddock J.R."/>
            <person name="Potocka I."/>
            <person name="Nelson W.C."/>
            <person name="Newton A."/>
            <person name="Stephens C."/>
            <person name="Phadke N.D."/>
            <person name="Ely B."/>
            <person name="DeBoy R.T."/>
            <person name="Dodson R.J."/>
            <person name="Durkin A.S."/>
            <person name="Gwinn M.L."/>
            <person name="Haft D.H."/>
            <person name="Kolonay J.F."/>
            <person name="Smit J."/>
            <person name="Craven M.B."/>
            <person name="Khouri H.M."/>
            <person name="Shetty J."/>
            <person name="Berry K.J."/>
            <person name="Utterback T.R."/>
            <person name="Tran K."/>
            <person name="Wolf A.M."/>
            <person name="Vamathevan J.J."/>
            <person name="Ermolaeva M.D."/>
            <person name="White O."/>
            <person name="Salzberg S.L."/>
            <person name="Venter J.C."/>
            <person name="Shapiro L."/>
            <person name="Fraser C.M."/>
        </authorList>
    </citation>
    <scope>NUCLEOTIDE SEQUENCE [LARGE SCALE GENOMIC DNA]</scope>
    <source>
        <strain>ATCC 19089 / CIP 103742 / CB 15</strain>
    </source>
</reference>
<comment type="catalytic activity">
    <reaction evidence="1">
        <text>tRNA(Leu) + L-leucine + ATP = L-leucyl-tRNA(Leu) + AMP + diphosphate</text>
        <dbReference type="Rhea" id="RHEA:11688"/>
        <dbReference type="Rhea" id="RHEA-COMP:9613"/>
        <dbReference type="Rhea" id="RHEA-COMP:9622"/>
        <dbReference type="ChEBI" id="CHEBI:30616"/>
        <dbReference type="ChEBI" id="CHEBI:33019"/>
        <dbReference type="ChEBI" id="CHEBI:57427"/>
        <dbReference type="ChEBI" id="CHEBI:78442"/>
        <dbReference type="ChEBI" id="CHEBI:78494"/>
        <dbReference type="ChEBI" id="CHEBI:456215"/>
        <dbReference type="EC" id="6.1.1.4"/>
    </reaction>
</comment>
<comment type="subcellular location">
    <subcellularLocation>
        <location evidence="1">Cytoplasm</location>
    </subcellularLocation>
</comment>
<comment type="similarity">
    <text evidence="1">Belongs to the class-I aminoacyl-tRNA synthetase family.</text>
</comment>
<keyword id="KW-0030">Aminoacyl-tRNA synthetase</keyword>
<keyword id="KW-0067">ATP-binding</keyword>
<keyword id="KW-0963">Cytoplasm</keyword>
<keyword id="KW-0436">Ligase</keyword>
<keyword id="KW-0547">Nucleotide-binding</keyword>
<keyword id="KW-0648">Protein biosynthesis</keyword>
<keyword id="KW-1185">Reference proteome</keyword>
<dbReference type="EC" id="6.1.1.4" evidence="1"/>
<dbReference type="EMBL" id="AE005673">
    <property type="protein sequence ID" value="AAK25711.1"/>
    <property type="molecule type" value="Genomic_DNA"/>
</dbReference>
<dbReference type="PIR" id="C87714">
    <property type="entry name" value="C87714"/>
</dbReference>
<dbReference type="RefSeq" id="NP_422543.1">
    <property type="nucleotide sequence ID" value="NC_002696.2"/>
</dbReference>
<dbReference type="RefSeq" id="WP_010921576.1">
    <property type="nucleotide sequence ID" value="NC_002696.2"/>
</dbReference>
<dbReference type="SMR" id="Q9A217"/>
<dbReference type="STRING" id="190650.CC_3749"/>
<dbReference type="EnsemblBacteria" id="AAK25711">
    <property type="protein sequence ID" value="AAK25711"/>
    <property type="gene ID" value="CC_3749"/>
</dbReference>
<dbReference type="KEGG" id="ccr:CC_3749"/>
<dbReference type="PATRIC" id="fig|190650.5.peg.3751"/>
<dbReference type="eggNOG" id="COG0495">
    <property type="taxonomic scope" value="Bacteria"/>
</dbReference>
<dbReference type="HOGENOM" id="CLU_004427_0_0_5"/>
<dbReference type="BioCyc" id="CAULO:CC3749-MONOMER"/>
<dbReference type="Proteomes" id="UP000001816">
    <property type="component" value="Chromosome"/>
</dbReference>
<dbReference type="GO" id="GO:0005829">
    <property type="term" value="C:cytosol"/>
    <property type="evidence" value="ECO:0007669"/>
    <property type="project" value="TreeGrafter"/>
</dbReference>
<dbReference type="GO" id="GO:0002161">
    <property type="term" value="F:aminoacyl-tRNA deacylase activity"/>
    <property type="evidence" value="ECO:0007669"/>
    <property type="project" value="InterPro"/>
</dbReference>
<dbReference type="GO" id="GO:0005524">
    <property type="term" value="F:ATP binding"/>
    <property type="evidence" value="ECO:0007669"/>
    <property type="project" value="UniProtKB-UniRule"/>
</dbReference>
<dbReference type="GO" id="GO:0004823">
    <property type="term" value="F:leucine-tRNA ligase activity"/>
    <property type="evidence" value="ECO:0007669"/>
    <property type="project" value="UniProtKB-UniRule"/>
</dbReference>
<dbReference type="GO" id="GO:0006429">
    <property type="term" value="P:leucyl-tRNA aminoacylation"/>
    <property type="evidence" value="ECO:0007669"/>
    <property type="project" value="UniProtKB-UniRule"/>
</dbReference>
<dbReference type="CDD" id="cd07958">
    <property type="entry name" value="Anticodon_Ia_Leu_BEm"/>
    <property type="match status" value="1"/>
</dbReference>
<dbReference type="CDD" id="cd00812">
    <property type="entry name" value="LeuRS_core"/>
    <property type="match status" value="1"/>
</dbReference>
<dbReference type="FunFam" id="1.10.730.10:FF:000002">
    <property type="entry name" value="Leucine--tRNA ligase"/>
    <property type="match status" value="1"/>
</dbReference>
<dbReference type="FunFam" id="3.40.50.620:FF:000003">
    <property type="entry name" value="Leucine--tRNA ligase"/>
    <property type="match status" value="1"/>
</dbReference>
<dbReference type="Gene3D" id="2.20.28.290">
    <property type="match status" value="1"/>
</dbReference>
<dbReference type="Gene3D" id="3.10.20.590">
    <property type="match status" value="1"/>
</dbReference>
<dbReference type="Gene3D" id="3.40.50.620">
    <property type="entry name" value="HUPs"/>
    <property type="match status" value="2"/>
</dbReference>
<dbReference type="Gene3D" id="1.10.730.10">
    <property type="entry name" value="Isoleucyl-tRNA Synthetase, Domain 1"/>
    <property type="match status" value="2"/>
</dbReference>
<dbReference type="Gene3D" id="3.90.740.10">
    <property type="entry name" value="Valyl/Leucyl/Isoleucyl-tRNA synthetase, editing domain"/>
    <property type="match status" value="1"/>
</dbReference>
<dbReference type="HAMAP" id="MF_00049_B">
    <property type="entry name" value="Leu_tRNA_synth_B"/>
    <property type="match status" value="1"/>
</dbReference>
<dbReference type="InterPro" id="IPR001412">
    <property type="entry name" value="aa-tRNA-synth_I_CS"/>
</dbReference>
<dbReference type="InterPro" id="IPR002300">
    <property type="entry name" value="aa-tRNA-synth_Ia"/>
</dbReference>
<dbReference type="InterPro" id="IPR002302">
    <property type="entry name" value="Leu-tRNA-ligase"/>
</dbReference>
<dbReference type="InterPro" id="IPR025709">
    <property type="entry name" value="Leu_tRNA-synth_edit"/>
</dbReference>
<dbReference type="InterPro" id="IPR013155">
    <property type="entry name" value="M/V/L/I-tRNA-synth_anticd-bd"/>
</dbReference>
<dbReference type="InterPro" id="IPR015413">
    <property type="entry name" value="Methionyl/Leucyl_tRNA_Synth"/>
</dbReference>
<dbReference type="InterPro" id="IPR014729">
    <property type="entry name" value="Rossmann-like_a/b/a_fold"/>
</dbReference>
<dbReference type="InterPro" id="IPR009080">
    <property type="entry name" value="tRNAsynth_Ia_anticodon-bd"/>
</dbReference>
<dbReference type="InterPro" id="IPR009008">
    <property type="entry name" value="Val/Leu/Ile-tRNA-synth_edit"/>
</dbReference>
<dbReference type="NCBIfam" id="TIGR00396">
    <property type="entry name" value="leuS_bact"/>
    <property type="match status" value="1"/>
</dbReference>
<dbReference type="PANTHER" id="PTHR43740:SF2">
    <property type="entry name" value="LEUCINE--TRNA LIGASE, MITOCHONDRIAL"/>
    <property type="match status" value="1"/>
</dbReference>
<dbReference type="PANTHER" id="PTHR43740">
    <property type="entry name" value="LEUCYL-TRNA SYNTHETASE"/>
    <property type="match status" value="1"/>
</dbReference>
<dbReference type="Pfam" id="PF08264">
    <property type="entry name" value="Anticodon_1"/>
    <property type="match status" value="1"/>
</dbReference>
<dbReference type="Pfam" id="PF00133">
    <property type="entry name" value="tRNA-synt_1"/>
    <property type="match status" value="2"/>
</dbReference>
<dbReference type="Pfam" id="PF13603">
    <property type="entry name" value="tRNA-synt_1_2"/>
    <property type="match status" value="1"/>
</dbReference>
<dbReference type="Pfam" id="PF09334">
    <property type="entry name" value="tRNA-synt_1g"/>
    <property type="match status" value="1"/>
</dbReference>
<dbReference type="PRINTS" id="PR00985">
    <property type="entry name" value="TRNASYNTHLEU"/>
</dbReference>
<dbReference type="SUPFAM" id="SSF47323">
    <property type="entry name" value="Anticodon-binding domain of a subclass of class I aminoacyl-tRNA synthetases"/>
    <property type="match status" value="1"/>
</dbReference>
<dbReference type="SUPFAM" id="SSF52374">
    <property type="entry name" value="Nucleotidylyl transferase"/>
    <property type="match status" value="1"/>
</dbReference>
<dbReference type="SUPFAM" id="SSF50677">
    <property type="entry name" value="ValRS/IleRS/LeuRS editing domain"/>
    <property type="match status" value="1"/>
</dbReference>
<dbReference type="PROSITE" id="PS00178">
    <property type="entry name" value="AA_TRNA_LIGASE_I"/>
    <property type="match status" value="1"/>
</dbReference>